<comment type="function">
    <text evidence="1">Formation of pseudouridine at positions 38, 39 and 40 in the anticodon stem and loop of transfer RNAs.</text>
</comment>
<comment type="catalytic activity">
    <reaction evidence="1">
        <text>uridine(38/39/40) in tRNA = pseudouridine(38/39/40) in tRNA</text>
        <dbReference type="Rhea" id="RHEA:22376"/>
        <dbReference type="Rhea" id="RHEA-COMP:10085"/>
        <dbReference type="Rhea" id="RHEA-COMP:10087"/>
        <dbReference type="ChEBI" id="CHEBI:65314"/>
        <dbReference type="ChEBI" id="CHEBI:65315"/>
        <dbReference type="EC" id="5.4.99.12"/>
    </reaction>
</comment>
<comment type="subunit">
    <text evidence="1">Homodimer.</text>
</comment>
<comment type="similarity">
    <text evidence="1">Belongs to the tRNA pseudouridine synthase TruA family.</text>
</comment>
<organism>
    <name type="scientific">Dictyoglomus thermophilum (strain ATCC 35947 / DSM 3960 / H-6-12)</name>
    <dbReference type="NCBI Taxonomy" id="309799"/>
    <lineage>
        <taxon>Bacteria</taxon>
        <taxon>Pseudomonadati</taxon>
        <taxon>Dictyoglomota</taxon>
        <taxon>Dictyoglomia</taxon>
        <taxon>Dictyoglomales</taxon>
        <taxon>Dictyoglomaceae</taxon>
        <taxon>Dictyoglomus</taxon>
    </lineage>
</organism>
<dbReference type="EC" id="5.4.99.12" evidence="1"/>
<dbReference type="EMBL" id="CP001146">
    <property type="protein sequence ID" value="ACI20111.1"/>
    <property type="molecule type" value="Genomic_DNA"/>
</dbReference>
<dbReference type="RefSeq" id="WP_012548743.1">
    <property type="nucleotide sequence ID" value="NC_011297.1"/>
</dbReference>
<dbReference type="SMR" id="B5YDX5"/>
<dbReference type="STRING" id="309799.DICTH_0869"/>
<dbReference type="PaxDb" id="309799-DICTH_0869"/>
<dbReference type="KEGG" id="dth:DICTH_0869"/>
<dbReference type="eggNOG" id="COG0101">
    <property type="taxonomic scope" value="Bacteria"/>
</dbReference>
<dbReference type="HOGENOM" id="CLU_014673_0_1_0"/>
<dbReference type="OrthoDB" id="9811823at2"/>
<dbReference type="Proteomes" id="UP000001733">
    <property type="component" value="Chromosome"/>
</dbReference>
<dbReference type="GO" id="GO:0003723">
    <property type="term" value="F:RNA binding"/>
    <property type="evidence" value="ECO:0007669"/>
    <property type="project" value="InterPro"/>
</dbReference>
<dbReference type="GO" id="GO:0160147">
    <property type="term" value="F:tRNA pseudouridine(38-40) synthase activity"/>
    <property type="evidence" value="ECO:0007669"/>
    <property type="project" value="UniProtKB-EC"/>
</dbReference>
<dbReference type="GO" id="GO:0031119">
    <property type="term" value="P:tRNA pseudouridine synthesis"/>
    <property type="evidence" value="ECO:0007669"/>
    <property type="project" value="UniProtKB-UniRule"/>
</dbReference>
<dbReference type="CDD" id="cd02570">
    <property type="entry name" value="PseudoU_synth_EcTruA"/>
    <property type="match status" value="1"/>
</dbReference>
<dbReference type="FunFam" id="3.30.70.580:FF:000001">
    <property type="entry name" value="tRNA pseudouridine synthase A"/>
    <property type="match status" value="1"/>
</dbReference>
<dbReference type="Gene3D" id="3.30.70.660">
    <property type="entry name" value="Pseudouridine synthase I, catalytic domain, C-terminal subdomain"/>
    <property type="match status" value="1"/>
</dbReference>
<dbReference type="Gene3D" id="3.30.70.580">
    <property type="entry name" value="Pseudouridine synthase I, catalytic domain, N-terminal subdomain"/>
    <property type="match status" value="1"/>
</dbReference>
<dbReference type="HAMAP" id="MF_00171">
    <property type="entry name" value="TruA"/>
    <property type="match status" value="1"/>
</dbReference>
<dbReference type="InterPro" id="IPR020103">
    <property type="entry name" value="PsdUridine_synth_cat_dom_sf"/>
</dbReference>
<dbReference type="InterPro" id="IPR001406">
    <property type="entry name" value="PsdUridine_synth_TruA"/>
</dbReference>
<dbReference type="InterPro" id="IPR020097">
    <property type="entry name" value="PsdUridine_synth_TruA_a/b_dom"/>
</dbReference>
<dbReference type="InterPro" id="IPR020095">
    <property type="entry name" value="PsdUridine_synth_TruA_C"/>
</dbReference>
<dbReference type="InterPro" id="IPR020094">
    <property type="entry name" value="TruA/RsuA/RluB/E/F_N"/>
</dbReference>
<dbReference type="NCBIfam" id="TIGR00071">
    <property type="entry name" value="hisT_truA"/>
    <property type="match status" value="1"/>
</dbReference>
<dbReference type="PANTHER" id="PTHR11142">
    <property type="entry name" value="PSEUDOURIDYLATE SYNTHASE"/>
    <property type="match status" value="1"/>
</dbReference>
<dbReference type="PANTHER" id="PTHR11142:SF0">
    <property type="entry name" value="TRNA PSEUDOURIDINE SYNTHASE-LIKE 1"/>
    <property type="match status" value="1"/>
</dbReference>
<dbReference type="Pfam" id="PF01416">
    <property type="entry name" value="PseudoU_synth_1"/>
    <property type="match status" value="2"/>
</dbReference>
<dbReference type="PIRSF" id="PIRSF001430">
    <property type="entry name" value="tRNA_psdUrid_synth"/>
    <property type="match status" value="1"/>
</dbReference>
<dbReference type="SUPFAM" id="SSF55120">
    <property type="entry name" value="Pseudouridine synthase"/>
    <property type="match status" value="1"/>
</dbReference>
<feature type="chain" id="PRO_1000097738" description="tRNA pseudouridine synthase A">
    <location>
        <begin position="1"/>
        <end position="245"/>
    </location>
</feature>
<feature type="active site" description="Nucleophile" evidence="1">
    <location>
        <position position="52"/>
    </location>
</feature>
<feature type="binding site" evidence="1">
    <location>
        <position position="112"/>
    </location>
    <ligand>
        <name>substrate</name>
    </ligand>
</feature>
<gene>
    <name evidence="1" type="primary">truA</name>
    <name type="ordered locus">DICTH_0869</name>
</gene>
<proteinExistence type="inferred from homology"/>
<evidence type="ECO:0000255" key="1">
    <source>
        <dbReference type="HAMAP-Rule" id="MF_00171"/>
    </source>
</evidence>
<reference key="1">
    <citation type="journal article" date="2014" name="Genome Announc.">
        <title>Complete Genome Sequence of the Extreme Thermophile Dictyoglomus thermophilum H-6-12.</title>
        <authorList>
            <person name="Coil D.A."/>
            <person name="Badger J.H."/>
            <person name="Forberger H.C."/>
            <person name="Riggs F."/>
            <person name="Madupu R."/>
            <person name="Fedorova N."/>
            <person name="Ward N."/>
            <person name="Robb F.T."/>
            <person name="Eisen J.A."/>
        </authorList>
    </citation>
    <scope>NUCLEOTIDE SEQUENCE [LARGE SCALE GENOMIC DNA]</scope>
    <source>
        <strain>ATCC 35947 / DSM 3960 / H-6-12</strain>
    </source>
</reference>
<accession>B5YDX5</accession>
<protein>
    <recommendedName>
        <fullName evidence="1">tRNA pseudouridine synthase A</fullName>
        <ecNumber evidence="1">5.4.99.12</ecNumber>
    </recommendedName>
    <alternativeName>
        <fullName evidence="1">tRNA pseudouridine(38-40) synthase</fullName>
    </alternativeName>
    <alternativeName>
        <fullName evidence="1">tRNA pseudouridylate synthase I</fullName>
    </alternativeName>
    <alternativeName>
        <fullName evidence="1">tRNA-uridine isomerase I</fullName>
    </alternativeName>
</protein>
<name>TRUA_DICT6</name>
<keyword id="KW-0413">Isomerase</keyword>
<keyword id="KW-0819">tRNA processing</keyword>
<sequence>MINWKVELSYIGKDFWGFQKQPGKRTVQGELEKVLKLLFDEDIKVIGAGRTDAGVHALGQVVNFKTKESKNFSCDKLYKVLNKLLPGDIKIKKVEIVDDNFHARYSAKRRWYIYVIYNNEEKNLFLRDYCWWINKPLDKDLLNLSANLFKGIHDFRNFCVIENYDNTNVEIYESFWYFKEDLLIYFVSAPFFLRKMVRFIVGSMVEVGLKKKELEDLEKYLKDRKEERFSSPAPASGLYLFKIDY</sequence>